<gene>
    <name evidence="1" type="primary">ruvA</name>
    <name type="ordered locus">Sden_1884</name>
</gene>
<comment type="function">
    <text evidence="1">The RuvA-RuvB-RuvC complex processes Holliday junction (HJ) DNA during genetic recombination and DNA repair, while the RuvA-RuvB complex plays an important role in the rescue of blocked DNA replication forks via replication fork reversal (RFR). RuvA specifically binds to HJ cruciform DNA, conferring on it an open structure. The RuvB hexamer acts as an ATP-dependent pump, pulling dsDNA into and through the RuvAB complex. HJ branch migration allows RuvC to scan DNA until it finds its consensus sequence, where it cleaves and resolves the cruciform DNA.</text>
</comment>
<comment type="subunit">
    <text evidence="1">Homotetramer. Forms an RuvA(8)-RuvB(12)-Holliday junction (HJ) complex. HJ DNA is sandwiched between 2 RuvA tetramers; dsDNA enters through RuvA and exits via RuvB. An RuvB hexamer assembles on each DNA strand where it exits the tetramer. Each RuvB hexamer is contacted by two RuvA subunits (via domain III) on 2 adjacent RuvB subunits; this complex drives branch migration. In the full resolvosome a probable DNA-RuvA(4)-RuvB(12)-RuvC(2) complex forms which resolves the HJ.</text>
</comment>
<comment type="subcellular location">
    <subcellularLocation>
        <location evidence="1">Cytoplasm</location>
    </subcellularLocation>
</comment>
<comment type="domain">
    <text evidence="1">Has three domains with a flexible linker between the domains II and III and assumes an 'L' shape. Domain III is highly mobile and contacts RuvB.</text>
</comment>
<comment type="similarity">
    <text evidence="1">Belongs to the RuvA family.</text>
</comment>
<keyword id="KW-0963">Cytoplasm</keyword>
<keyword id="KW-0227">DNA damage</keyword>
<keyword id="KW-0233">DNA recombination</keyword>
<keyword id="KW-0234">DNA repair</keyword>
<keyword id="KW-0238">DNA-binding</keyword>
<keyword id="KW-1185">Reference proteome</keyword>
<dbReference type="EMBL" id="CP000302">
    <property type="protein sequence ID" value="ABE55167.1"/>
    <property type="molecule type" value="Genomic_DNA"/>
</dbReference>
<dbReference type="RefSeq" id="WP_011496323.1">
    <property type="nucleotide sequence ID" value="NC_007954.1"/>
</dbReference>
<dbReference type="SMR" id="Q12N09"/>
<dbReference type="STRING" id="318161.Sden_1884"/>
<dbReference type="KEGG" id="sdn:Sden_1884"/>
<dbReference type="eggNOG" id="COG0632">
    <property type="taxonomic scope" value="Bacteria"/>
</dbReference>
<dbReference type="HOGENOM" id="CLU_087936_0_0_6"/>
<dbReference type="OrthoDB" id="5293449at2"/>
<dbReference type="Proteomes" id="UP000001982">
    <property type="component" value="Chromosome"/>
</dbReference>
<dbReference type="GO" id="GO:0005737">
    <property type="term" value="C:cytoplasm"/>
    <property type="evidence" value="ECO:0007669"/>
    <property type="project" value="UniProtKB-SubCell"/>
</dbReference>
<dbReference type="GO" id="GO:0009379">
    <property type="term" value="C:Holliday junction helicase complex"/>
    <property type="evidence" value="ECO:0007669"/>
    <property type="project" value="InterPro"/>
</dbReference>
<dbReference type="GO" id="GO:0048476">
    <property type="term" value="C:Holliday junction resolvase complex"/>
    <property type="evidence" value="ECO:0007669"/>
    <property type="project" value="UniProtKB-UniRule"/>
</dbReference>
<dbReference type="GO" id="GO:0005524">
    <property type="term" value="F:ATP binding"/>
    <property type="evidence" value="ECO:0007669"/>
    <property type="project" value="InterPro"/>
</dbReference>
<dbReference type="GO" id="GO:0000400">
    <property type="term" value="F:four-way junction DNA binding"/>
    <property type="evidence" value="ECO:0007669"/>
    <property type="project" value="UniProtKB-UniRule"/>
</dbReference>
<dbReference type="GO" id="GO:0009378">
    <property type="term" value="F:four-way junction helicase activity"/>
    <property type="evidence" value="ECO:0007669"/>
    <property type="project" value="InterPro"/>
</dbReference>
<dbReference type="GO" id="GO:0006310">
    <property type="term" value="P:DNA recombination"/>
    <property type="evidence" value="ECO:0007669"/>
    <property type="project" value="UniProtKB-UniRule"/>
</dbReference>
<dbReference type="GO" id="GO:0006281">
    <property type="term" value="P:DNA repair"/>
    <property type="evidence" value="ECO:0007669"/>
    <property type="project" value="UniProtKB-UniRule"/>
</dbReference>
<dbReference type="CDD" id="cd14332">
    <property type="entry name" value="UBA_RuvA_C"/>
    <property type="match status" value="1"/>
</dbReference>
<dbReference type="Gene3D" id="1.10.150.20">
    <property type="entry name" value="5' to 3' exonuclease, C-terminal subdomain"/>
    <property type="match status" value="1"/>
</dbReference>
<dbReference type="Gene3D" id="1.10.8.10">
    <property type="entry name" value="DNA helicase RuvA subunit, C-terminal domain"/>
    <property type="match status" value="1"/>
</dbReference>
<dbReference type="Gene3D" id="2.40.50.140">
    <property type="entry name" value="Nucleic acid-binding proteins"/>
    <property type="match status" value="1"/>
</dbReference>
<dbReference type="HAMAP" id="MF_00031">
    <property type="entry name" value="DNA_HJ_migration_RuvA"/>
    <property type="match status" value="1"/>
</dbReference>
<dbReference type="InterPro" id="IPR013849">
    <property type="entry name" value="DNA_helicase_Holl-junc_RuvA_I"/>
</dbReference>
<dbReference type="InterPro" id="IPR003583">
    <property type="entry name" value="Hlx-hairpin-Hlx_DNA-bd_motif"/>
</dbReference>
<dbReference type="InterPro" id="IPR012340">
    <property type="entry name" value="NA-bd_OB-fold"/>
</dbReference>
<dbReference type="InterPro" id="IPR000085">
    <property type="entry name" value="RuvA"/>
</dbReference>
<dbReference type="InterPro" id="IPR010994">
    <property type="entry name" value="RuvA_2-like"/>
</dbReference>
<dbReference type="InterPro" id="IPR011114">
    <property type="entry name" value="RuvA_C"/>
</dbReference>
<dbReference type="InterPro" id="IPR036267">
    <property type="entry name" value="RuvA_C_sf"/>
</dbReference>
<dbReference type="NCBIfam" id="TIGR00084">
    <property type="entry name" value="ruvA"/>
    <property type="match status" value="1"/>
</dbReference>
<dbReference type="Pfam" id="PF14520">
    <property type="entry name" value="HHH_5"/>
    <property type="match status" value="1"/>
</dbReference>
<dbReference type="Pfam" id="PF07499">
    <property type="entry name" value="RuvA_C"/>
    <property type="match status" value="1"/>
</dbReference>
<dbReference type="Pfam" id="PF01330">
    <property type="entry name" value="RuvA_N"/>
    <property type="match status" value="1"/>
</dbReference>
<dbReference type="SMART" id="SM00278">
    <property type="entry name" value="HhH1"/>
    <property type="match status" value="2"/>
</dbReference>
<dbReference type="SUPFAM" id="SSF46929">
    <property type="entry name" value="DNA helicase RuvA subunit, C-terminal domain"/>
    <property type="match status" value="1"/>
</dbReference>
<dbReference type="SUPFAM" id="SSF50249">
    <property type="entry name" value="Nucleic acid-binding proteins"/>
    <property type="match status" value="1"/>
</dbReference>
<dbReference type="SUPFAM" id="SSF47781">
    <property type="entry name" value="RuvA domain 2-like"/>
    <property type="match status" value="1"/>
</dbReference>
<name>RUVA_SHEDO</name>
<evidence type="ECO:0000255" key="1">
    <source>
        <dbReference type="HAMAP-Rule" id="MF_00031"/>
    </source>
</evidence>
<organism>
    <name type="scientific">Shewanella denitrificans (strain OS217 / ATCC BAA-1090 / DSM 15013)</name>
    <dbReference type="NCBI Taxonomy" id="318161"/>
    <lineage>
        <taxon>Bacteria</taxon>
        <taxon>Pseudomonadati</taxon>
        <taxon>Pseudomonadota</taxon>
        <taxon>Gammaproteobacteria</taxon>
        <taxon>Alteromonadales</taxon>
        <taxon>Shewanellaceae</taxon>
        <taxon>Shewanella</taxon>
    </lineage>
</organism>
<sequence length="203" mass="22293">MIGRLNGILVEKHAPEIVLDVGGVGYELQVPMTSFYELPELEQSATLYTHFVVREDAQLLYGFITKQERALFRLLIKTNGVGPKLALTILSGMTAGEFVSCVERDDIVTLVKLPGVGKKTAERLVVEMRDKLKSLLEASVGNEREFMLQTNYTAPAANAEEDAISALVSLGYKPPQASRAVSKAYKEGMDTETLIKLALKSML</sequence>
<protein>
    <recommendedName>
        <fullName evidence="1">Holliday junction branch migration complex subunit RuvA</fullName>
    </recommendedName>
</protein>
<accession>Q12N09</accession>
<feature type="chain" id="PRO_1000002548" description="Holliday junction branch migration complex subunit RuvA">
    <location>
        <begin position="1"/>
        <end position="203"/>
    </location>
</feature>
<feature type="region of interest" description="Domain I" evidence="1">
    <location>
        <begin position="1"/>
        <end position="64"/>
    </location>
</feature>
<feature type="region of interest" description="Domain II" evidence="1">
    <location>
        <begin position="65"/>
        <end position="143"/>
    </location>
</feature>
<feature type="region of interest" description="Flexible linker" evidence="1">
    <location>
        <begin position="144"/>
        <end position="154"/>
    </location>
</feature>
<feature type="region of interest" description="Domain III" evidence="1">
    <location>
        <begin position="155"/>
        <end position="203"/>
    </location>
</feature>
<proteinExistence type="inferred from homology"/>
<reference key="1">
    <citation type="submission" date="2006-03" db="EMBL/GenBank/DDBJ databases">
        <title>Complete sequence of Shewanella denitrificans OS217.</title>
        <authorList>
            <consortium name="US DOE Joint Genome Institute"/>
            <person name="Copeland A."/>
            <person name="Lucas S."/>
            <person name="Lapidus A."/>
            <person name="Barry K."/>
            <person name="Detter J.C."/>
            <person name="Glavina del Rio T."/>
            <person name="Hammon N."/>
            <person name="Israni S."/>
            <person name="Dalin E."/>
            <person name="Tice H."/>
            <person name="Pitluck S."/>
            <person name="Brettin T."/>
            <person name="Bruce D."/>
            <person name="Han C."/>
            <person name="Tapia R."/>
            <person name="Gilna P."/>
            <person name="Kiss H."/>
            <person name="Schmutz J."/>
            <person name="Larimer F."/>
            <person name="Land M."/>
            <person name="Hauser L."/>
            <person name="Kyrpides N."/>
            <person name="Lykidis A."/>
            <person name="Richardson P."/>
        </authorList>
    </citation>
    <scope>NUCLEOTIDE SEQUENCE [LARGE SCALE GENOMIC DNA]</scope>
    <source>
        <strain>OS217 / ATCC BAA-1090 / DSM 15013</strain>
    </source>
</reference>